<organism>
    <name type="scientific">Salmonella typhimurium (strain LT2 / SGSC1412 / ATCC 700720)</name>
    <dbReference type="NCBI Taxonomy" id="99287"/>
    <lineage>
        <taxon>Bacteria</taxon>
        <taxon>Pseudomonadati</taxon>
        <taxon>Pseudomonadota</taxon>
        <taxon>Gammaproteobacteria</taxon>
        <taxon>Enterobacterales</taxon>
        <taxon>Enterobacteriaceae</taxon>
        <taxon>Salmonella</taxon>
    </lineage>
</organism>
<name>PUR5_SALTY</name>
<feature type="initiator methionine" description="Removed" evidence="1">
    <location>
        <position position="1"/>
    </location>
</feature>
<feature type="chain" id="PRO_0000148242" description="Phosphoribosylformylglycinamidine cyclo-ligase">
    <location>
        <begin position="2"/>
        <end position="345"/>
    </location>
</feature>
<protein>
    <recommendedName>
        <fullName evidence="2">Phosphoribosylformylglycinamidine cyclo-ligase</fullName>
        <ecNumber evidence="2">6.3.3.1</ecNumber>
    </recommendedName>
    <alternativeName>
        <fullName evidence="2">AIR synthase</fullName>
    </alternativeName>
    <alternativeName>
        <fullName evidence="2">AIRS</fullName>
    </alternativeName>
    <alternativeName>
        <fullName evidence="2">Phosphoribosyl-aminoimidazole synthetase</fullName>
    </alternativeName>
</protein>
<sequence>MTDKTSLSYKDAGVDIDAGNALVDRIKGVVKKTRRPEVMGGLGGFGALCALPQKYREPVLVSGTDGVGTKLRLAMDLKRHDAIGIDLVAMCVNDLVVQGAEPLFFLDYYATGKLDVDTAASVINGIAEGCLQSGCALVGGETAEMPGMYHGEDYDVAGFCVGVVEKSEIIDGSRVAEGDVLIALGSSGPHSNGYSLVRKIIDVSGCDPQTTLLEGKPLADHLLEPTRIYVKSVLELIENVDVHAIAHLTGGGFWENIPRVLPENTQAVINESSWQWPAIFTWLQTAGNVSRHEMYRTFNCGVGMVIALSAPEADKALALLNEKGENAWKIGIIKASDSEQRVVIE</sequence>
<evidence type="ECO:0000250" key="1"/>
<evidence type="ECO:0000255" key="2">
    <source>
        <dbReference type="HAMAP-Rule" id="MF_00741"/>
    </source>
</evidence>
<reference key="1">
    <citation type="submission" date="1996-09" db="EMBL/GenBank/DDBJ databases">
        <authorList>
            <person name="Zilles J.L."/>
            <person name="Downs D.M."/>
        </authorList>
    </citation>
    <scope>NUCLEOTIDE SEQUENCE [GENOMIC DNA]</scope>
    <source>
        <strain>LT2</strain>
    </source>
</reference>
<reference key="2">
    <citation type="journal article" date="2001" name="Nature">
        <title>Complete genome sequence of Salmonella enterica serovar Typhimurium LT2.</title>
        <authorList>
            <person name="McClelland M."/>
            <person name="Sanderson K.E."/>
            <person name="Spieth J."/>
            <person name="Clifton S.W."/>
            <person name="Latreille P."/>
            <person name="Courtney L."/>
            <person name="Porwollik S."/>
            <person name="Ali J."/>
            <person name="Dante M."/>
            <person name="Du F."/>
            <person name="Hou S."/>
            <person name="Layman D."/>
            <person name="Leonard S."/>
            <person name="Nguyen C."/>
            <person name="Scott K."/>
            <person name="Holmes A."/>
            <person name="Grewal N."/>
            <person name="Mulvaney E."/>
            <person name="Ryan E."/>
            <person name="Sun H."/>
            <person name="Florea L."/>
            <person name="Miller W."/>
            <person name="Stoneking T."/>
            <person name="Nhan M."/>
            <person name="Waterston R."/>
            <person name="Wilson R.K."/>
        </authorList>
    </citation>
    <scope>NUCLEOTIDE SEQUENCE [LARGE SCALE GENOMIC DNA]</scope>
    <source>
        <strain>LT2 / SGSC1412 / ATCC 700720</strain>
    </source>
</reference>
<accession>P74883</accession>
<proteinExistence type="inferred from homology"/>
<dbReference type="EC" id="6.3.3.1" evidence="2"/>
<dbReference type="EMBL" id="U68765">
    <property type="protein sequence ID" value="AAB08890.1"/>
    <property type="molecule type" value="Genomic_DNA"/>
</dbReference>
<dbReference type="EMBL" id="AE006468">
    <property type="protein sequence ID" value="AAL21393.1"/>
    <property type="molecule type" value="Genomic_DNA"/>
</dbReference>
<dbReference type="RefSeq" id="NP_461434.3">
    <property type="nucleotide sequence ID" value="NC_003197.2"/>
</dbReference>
<dbReference type="RefSeq" id="WP_000130477.1">
    <property type="nucleotide sequence ID" value="NC_003197.2"/>
</dbReference>
<dbReference type="SMR" id="P74883"/>
<dbReference type="STRING" id="99287.STM2499"/>
<dbReference type="PaxDb" id="99287-STM2499"/>
<dbReference type="GeneID" id="1254021"/>
<dbReference type="KEGG" id="stm:STM2499"/>
<dbReference type="PATRIC" id="fig|99287.12.peg.2638"/>
<dbReference type="HOGENOM" id="CLU_047116_0_0_6"/>
<dbReference type="PhylomeDB" id="P74883"/>
<dbReference type="BioCyc" id="SENT99287:STM2499-MONOMER"/>
<dbReference type="BRENDA" id="6.3.3.1">
    <property type="organism ID" value="2169"/>
</dbReference>
<dbReference type="UniPathway" id="UPA00074">
    <property type="reaction ID" value="UER00129"/>
</dbReference>
<dbReference type="Proteomes" id="UP000001014">
    <property type="component" value="Chromosome"/>
</dbReference>
<dbReference type="GO" id="GO:0005829">
    <property type="term" value="C:cytosol"/>
    <property type="evidence" value="ECO:0000318"/>
    <property type="project" value="GO_Central"/>
</dbReference>
<dbReference type="GO" id="GO:0005524">
    <property type="term" value="F:ATP binding"/>
    <property type="evidence" value="ECO:0007669"/>
    <property type="project" value="UniProtKB-KW"/>
</dbReference>
<dbReference type="GO" id="GO:0004637">
    <property type="term" value="F:phosphoribosylamine-glycine ligase activity"/>
    <property type="evidence" value="ECO:0000318"/>
    <property type="project" value="GO_Central"/>
</dbReference>
<dbReference type="GO" id="GO:0004641">
    <property type="term" value="F:phosphoribosylformylglycinamidine cyclo-ligase activity"/>
    <property type="evidence" value="ECO:0000318"/>
    <property type="project" value="GO_Central"/>
</dbReference>
<dbReference type="GO" id="GO:0006189">
    <property type="term" value="P:'de novo' IMP biosynthetic process"/>
    <property type="evidence" value="ECO:0007669"/>
    <property type="project" value="UniProtKB-UniRule"/>
</dbReference>
<dbReference type="GO" id="GO:0046084">
    <property type="term" value="P:adenine biosynthetic process"/>
    <property type="evidence" value="ECO:0000318"/>
    <property type="project" value="GO_Central"/>
</dbReference>
<dbReference type="GO" id="GO:0006164">
    <property type="term" value="P:purine nucleotide biosynthetic process"/>
    <property type="evidence" value="ECO:0000318"/>
    <property type="project" value="GO_Central"/>
</dbReference>
<dbReference type="CDD" id="cd02196">
    <property type="entry name" value="PurM"/>
    <property type="match status" value="1"/>
</dbReference>
<dbReference type="FunFam" id="3.30.1330.10:FF:000001">
    <property type="entry name" value="Phosphoribosylformylglycinamidine cyclo-ligase"/>
    <property type="match status" value="1"/>
</dbReference>
<dbReference type="FunFam" id="3.90.650.10:FF:000001">
    <property type="entry name" value="Phosphoribosylformylglycinamidine cyclo-ligase"/>
    <property type="match status" value="1"/>
</dbReference>
<dbReference type="Gene3D" id="3.90.650.10">
    <property type="entry name" value="PurM-like C-terminal domain"/>
    <property type="match status" value="1"/>
</dbReference>
<dbReference type="Gene3D" id="3.30.1330.10">
    <property type="entry name" value="PurM-like, N-terminal domain"/>
    <property type="match status" value="1"/>
</dbReference>
<dbReference type="HAMAP" id="MF_00741">
    <property type="entry name" value="AIRS"/>
    <property type="match status" value="1"/>
</dbReference>
<dbReference type="InterPro" id="IPR010918">
    <property type="entry name" value="PurM-like_C_dom"/>
</dbReference>
<dbReference type="InterPro" id="IPR036676">
    <property type="entry name" value="PurM-like_C_sf"/>
</dbReference>
<dbReference type="InterPro" id="IPR016188">
    <property type="entry name" value="PurM-like_N"/>
</dbReference>
<dbReference type="InterPro" id="IPR036921">
    <property type="entry name" value="PurM-like_N_sf"/>
</dbReference>
<dbReference type="InterPro" id="IPR004733">
    <property type="entry name" value="PurM_cligase"/>
</dbReference>
<dbReference type="NCBIfam" id="TIGR00878">
    <property type="entry name" value="purM"/>
    <property type="match status" value="1"/>
</dbReference>
<dbReference type="PANTHER" id="PTHR10520:SF12">
    <property type="entry name" value="TRIFUNCTIONAL PURINE BIOSYNTHETIC PROTEIN ADENOSINE-3"/>
    <property type="match status" value="1"/>
</dbReference>
<dbReference type="PANTHER" id="PTHR10520">
    <property type="entry name" value="TRIFUNCTIONAL PURINE BIOSYNTHETIC PROTEIN ADENOSINE-3-RELATED"/>
    <property type="match status" value="1"/>
</dbReference>
<dbReference type="Pfam" id="PF00586">
    <property type="entry name" value="AIRS"/>
    <property type="match status" value="1"/>
</dbReference>
<dbReference type="Pfam" id="PF02769">
    <property type="entry name" value="AIRS_C"/>
    <property type="match status" value="1"/>
</dbReference>
<dbReference type="SUPFAM" id="SSF56042">
    <property type="entry name" value="PurM C-terminal domain-like"/>
    <property type="match status" value="1"/>
</dbReference>
<dbReference type="SUPFAM" id="SSF55326">
    <property type="entry name" value="PurM N-terminal domain-like"/>
    <property type="match status" value="1"/>
</dbReference>
<keyword id="KW-0067">ATP-binding</keyword>
<keyword id="KW-0963">Cytoplasm</keyword>
<keyword id="KW-0436">Ligase</keyword>
<keyword id="KW-0547">Nucleotide-binding</keyword>
<keyword id="KW-0658">Purine biosynthesis</keyword>
<keyword id="KW-1185">Reference proteome</keyword>
<gene>
    <name evidence="2" type="primary">purM</name>
    <name type="ordered locus">STM2499</name>
</gene>
<comment type="catalytic activity">
    <reaction evidence="2">
        <text>2-formamido-N(1)-(5-O-phospho-beta-D-ribosyl)acetamidine + ATP = 5-amino-1-(5-phospho-beta-D-ribosyl)imidazole + ADP + phosphate + H(+)</text>
        <dbReference type="Rhea" id="RHEA:23032"/>
        <dbReference type="ChEBI" id="CHEBI:15378"/>
        <dbReference type="ChEBI" id="CHEBI:30616"/>
        <dbReference type="ChEBI" id="CHEBI:43474"/>
        <dbReference type="ChEBI" id="CHEBI:137981"/>
        <dbReference type="ChEBI" id="CHEBI:147287"/>
        <dbReference type="ChEBI" id="CHEBI:456216"/>
        <dbReference type="EC" id="6.3.3.1"/>
    </reaction>
</comment>
<comment type="pathway">
    <text evidence="2">Purine metabolism; IMP biosynthesis via de novo pathway; 5-amino-1-(5-phospho-D-ribosyl)imidazole from N(2)-formyl-N(1)-(5-phospho-D-ribosyl)glycinamide: step 2/2.</text>
</comment>
<comment type="subcellular location">
    <subcellularLocation>
        <location evidence="2">Cytoplasm</location>
    </subcellularLocation>
</comment>
<comment type="similarity">
    <text evidence="2">Belongs to the AIR synthase family.</text>
</comment>